<comment type="similarity">
    <text evidence="1">Belongs to the 2H phosphoesterase superfamily. YjcG family.</text>
</comment>
<name>Y743_GEOTN</name>
<organism>
    <name type="scientific">Geobacillus thermodenitrificans (strain NG80-2)</name>
    <dbReference type="NCBI Taxonomy" id="420246"/>
    <lineage>
        <taxon>Bacteria</taxon>
        <taxon>Bacillati</taxon>
        <taxon>Bacillota</taxon>
        <taxon>Bacilli</taxon>
        <taxon>Bacillales</taxon>
        <taxon>Anoxybacillaceae</taxon>
        <taxon>Geobacillus</taxon>
    </lineage>
</organism>
<accession>A4ILB9</accession>
<sequence length="173" mass="20015">MKYGIVLFPSKCIQDFANSYRKRYDSHYALIPPHITLKYPFEANEGQLKEMTKELHRIAAETPPIPIKVTKFSSFYPTSNIIYLKVEQNDVLKHLHEQLHSGLFAGKPEFAFVPHITIGRDLPGAEYADVYSQVKLQHVHFEETIDRFHLLYQLENGSWTVYDTFVVGGKETV</sequence>
<dbReference type="EC" id="3.1.-.-" evidence="1"/>
<dbReference type="EMBL" id="CP000557">
    <property type="protein sequence ID" value="ABO66123.1"/>
    <property type="molecule type" value="Genomic_DNA"/>
</dbReference>
<dbReference type="RefSeq" id="WP_008878925.1">
    <property type="nucleotide sequence ID" value="NC_009328.1"/>
</dbReference>
<dbReference type="SMR" id="A4ILB9"/>
<dbReference type="KEGG" id="gtn:GTNG_0743"/>
<dbReference type="eggNOG" id="COG1514">
    <property type="taxonomic scope" value="Bacteria"/>
</dbReference>
<dbReference type="HOGENOM" id="CLU_132020_0_0_9"/>
<dbReference type="Proteomes" id="UP000001578">
    <property type="component" value="Chromosome"/>
</dbReference>
<dbReference type="GO" id="GO:0016788">
    <property type="term" value="F:hydrolase activity, acting on ester bonds"/>
    <property type="evidence" value="ECO:0007669"/>
    <property type="project" value="UniProtKB-UniRule"/>
</dbReference>
<dbReference type="Gene3D" id="3.90.1140.10">
    <property type="entry name" value="Cyclic phosphodiesterase"/>
    <property type="match status" value="1"/>
</dbReference>
<dbReference type="HAMAP" id="MF_01444">
    <property type="entry name" value="2H_phosphoesterase_YjcG"/>
    <property type="match status" value="1"/>
</dbReference>
<dbReference type="InterPro" id="IPR050580">
    <property type="entry name" value="2H_phosphoesterase_YjcG-like"/>
</dbReference>
<dbReference type="InterPro" id="IPR009097">
    <property type="entry name" value="Cyclic_Pdiesterase"/>
</dbReference>
<dbReference type="InterPro" id="IPR022932">
    <property type="entry name" value="YjcG"/>
</dbReference>
<dbReference type="NCBIfam" id="NF010223">
    <property type="entry name" value="PRK13679.1"/>
    <property type="match status" value="1"/>
</dbReference>
<dbReference type="PANTHER" id="PTHR40037:SF1">
    <property type="entry name" value="PHOSPHOESTERASE SAOUHSC_00951-RELATED"/>
    <property type="match status" value="1"/>
</dbReference>
<dbReference type="PANTHER" id="PTHR40037">
    <property type="entry name" value="PHOSPHOESTERASE YJCG-RELATED"/>
    <property type="match status" value="1"/>
</dbReference>
<dbReference type="Pfam" id="PF13563">
    <property type="entry name" value="2_5_RNA_ligase2"/>
    <property type="match status" value="1"/>
</dbReference>
<dbReference type="SUPFAM" id="SSF55144">
    <property type="entry name" value="LigT-like"/>
    <property type="match status" value="1"/>
</dbReference>
<feature type="chain" id="PRO_0000299335" description="Putative phosphoesterase GTNG_0743">
    <location>
        <begin position="1"/>
        <end position="173"/>
    </location>
</feature>
<feature type="short sequence motif" description="HXTX 1" evidence="1">
    <location>
        <begin position="34"/>
        <end position="37"/>
    </location>
</feature>
<feature type="short sequence motif" description="HXTX 2" evidence="1">
    <location>
        <begin position="115"/>
        <end position="118"/>
    </location>
</feature>
<feature type="active site" description="Proton donor" evidence="1">
    <location>
        <position position="34"/>
    </location>
</feature>
<feature type="active site" description="Proton acceptor" evidence="1">
    <location>
        <position position="115"/>
    </location>
</feature>
<protein>
    <recommendedName>
        <fullName evidence="1">Putative phosphoesterase GTNG_0743</fullName>
        <ecNumber evidence="1">3.1.-.-</ecNumber>
    </recommendedName>
</protein>
<gene>
    <name type="ordered locus">GTNG_0743</name>
</gene>
<keyword id="KW-0378">Hydrolase</keyword>
<evidence type="ECO:0000255" key="1">
    <source>
        <dbReference type="HAMAP-Rule" id="MF_01444"/>
    </source>
</evidence>
<proteinExistence type="inferred from homology"/>
<reference key="1">
    <citation type="journal article" date="2007" name="Proc. Natl. Acad. Sci. U.S.A.">
        <title>Genome and proteome of long-chain alkane degrading Geobacillus thermodenitrificans NG80-2 isolated from a deep-subsurface oil reservoir.</title>
        <authorList>
            <person name="Feng L."/>
            <person name="Wang W."/>
            <person name="Cheng J."/>
            <person name="Ren Y."/>
            <person name="Zhao G."/>
            <person name="Gao C."/>
            <person name="Tang Y."/>
            <person name="Liu X."/>
            <person name="Han W."/>
            <person name="Peng X."/>
            <person name="Liu R."/>
            <person name="Wang L."/>
        </authorList>
    </citation>
    <scope>NUCLEOTIDE SEQUENCE [LARGE SCALE GENOMIC DNA]</scope>
    <source>
        <strain>NG80-2</strain>
    </source>
</reference>